<sequence length="208" mass="23866">MEPVKMTNSSDDFTQSAEPFKLFAEWLADAAKSEPNDPNAVALATVDPDGLPNVRMVLLKDFDETGFVFYTNYESKKGQEILSAEKAAMCFHWKSLRRQVRVRGPVEKVSDAEADAYYASRPRGSRIGAWASKQSRPLESRFALEKAVAEYTAKYAIGDIPRPPYWSGFRIRPVSIEFWHDRPFRLHDRVLFTRPTPEGDWNKDRLYP</sequence>
<organism>
    <name type="scientific">Brucella suis biovar 1 (strain 1330)</name>
    <dbReference type="NCBI Taxonomy" id="204722"/>
    <lineage>
        <taxon>Bacteria</taxon>
        <taxon>Pseudomonadati</taxon>
        <taxon>Pseudomonadota</taxon>
        <taxon>Alphaproteobacteria</taxon>
        <taxon>Hyphomicrobiales</taxon>
        <taxon>Brucellaceae</taxon>
        <taxon>Brucella/Ochrobactrum group</taxon>
        <taxon>Brucella</taxon>
    </lineage>
</organism>
<comment type="function">
    <text evidence="1">Catalyzes the oxidation of either pyridoxine 5'-phosphate (PNP) or pyridoxamine 5'-phosphate (PMP) into pyridoxal 5'-phosphate (PLP).</text>
</comment>
<comment type="catalytic activity">
    <reaction evidence="1">
        <text>pyridoxamine 5'-phosphate + O2 + H2O = pyridoxal 5'-phosphate + H2O2 + NH4(+)</text>
        <dbReference type="Rhea" id="RHEA:15817"/>
        <dbReference type="ChEBI" id="CHEBI:15377"/>
        <dbReference type="ChEBI" id="CHEBI:15379"/>
        <dbReference type="ChEBI" id="CHEBI:16240"/>
        <dbReference type="ChEBI" id="CHEBI:28938"/>
        <dbReference type="ChEBI" id="CHEBI:58451"/>
        <dbReference type="ChEBI" id="CHEBI:597326"/>
        <dbReference type="EC" id="1.4.3.5"/>
    </reaction>
</comment>
<comment type="catalytic activity">
    <reaction evidence="1">
        <text>pyridoxine 5'-phosphate + O2 = pyridoxal 5'-phosphate + H2O2</text>
        <dbReference type="Rhea" id="RHEA:15149"/>
        <dbReference type="ChEBI" id="CHEBI:15379"/>
        <dbReference type="ChEBI" id="CHEBI:16240"/>
        <dbReference type="ChEBI" id="CHEBI:58589"/>
        <dbReference type="ChEBI" id="CHEBI:597326"/>
        <dbReference type="EC" id="1.4.3.5"/>
    </reaction>
</comment>
<comment type="cofactor">
    <cofactor evidence="1">
        <name>FMN</name>
        <dbReference type="ChEBI" id="CHEBI:58210"/>
    </cofactor>
    <text evidence="1">Binds 1 FMN per subunit.</text>
</comment>
<comment type="pathway">
    <text evidence="1">Cofactor metabolism; pyridoxal 5'-phosphate salvage; pyridoxal 5'-phosphate from pyridoxamine 5'-phosphate: step 1/1.</text>
</comment>
<comment type="pathway">
    <text evidence="1">Cofactor metabolism; pyridoxal 5'-phosphate salvage; pyridoxal 5'-phosphate from pyridoxine 5'-phosphate: step 1/1.</text>
</comment>
<comment type="subunit">
    <text evidence="1">Homodimer.</text>
</comment>
<comment type="similarity">
    <text evidence="1">Belongs to the pyridoxamine 5'-phosphate oxidase family.</text>
</comment>
<feature type="chain" id="PRO_0000167694" description="Pyridoxine/pyridoxamine 5'-phosphate oxidase">
    <location>
        <begin position="1"/>
        <end position="208"/>
    </location>
</feature>
<feature type="binding site" evidence="1">
    <location>
        <begin position="55"/>
        <end position="60"/>
    </location>
    <ligand>
        <name>FMN</name>
        <dbReference type="ChEBI" id="CHEBI:58210"/>
    </ligand>
</feature>
<feature type="binding site" evidence="1">
    <location>
        <position position="60"/>
    </location>
    <ligand>
        <name>substrate</name>
    </ligand>
</feature>
<feature type="binding site" evidence="1">
    <location>
        <begin position="70"/>
        <end position="71"/>
    </location>
    <ligand>
        <name>FMN</name>
        <dbReference type="ChEBI" id="CHEBI:58210"/>
    </ligand>
</feature>
<feature type="binding site" evidence="1">
    <location>
        <position position="76"/>
    </location>
    <ligand>
        <name>FMN</name>
        <dbReference type="ChEBI" id="CHEBI:58210"/>
    </ligand>
</feature>
<feature type="binding site" evidence="1">
    <location>
        <position position="77"/>
    </location>
    <ligand>
        <name>FMN</name>
        <dbReference type="ChEBI" id="CHEBI:58210"/>
    </ligand>
</feature>
<feature type="binding site" evidence="1">
    <location>
        <position position="99"/>
    </location>
    <ligand>
        <name>FMN</name>
        <dbReference type="ChEBI" id="CHEBI:58210"/>
    </ligand>
</feature>
<feature type="binding site" evidence="1">
    <location>
        <position position="117"/>
    </location>
    <ligand>
        <name>substrate</name>
    </ligand>
</feature>
<feature type="binding site" evidence="1">
    <location>
        <position position="121"/>
    </location>
    <ligand>
        <name>substrate</name>
    </ligand>
</feature>
<feature type="binding site" evidence="1">
    <location>
        <position position="125"/>
    </location>
    <ligand>
        <name>substrate</name>
    </ligand>
</feature>
<feature type="binding site" evidence="1">
    <location>
        <begin position="134"/>
        <end position="135"/>
    </location>
    <ligand>
        <name>FMN</name>
        <dbReference type="ChEBI" id="CHEBI:58210"/>
    </ligand>
</feature>
<feature type="binding site" evidence="1">
    <location>
        <position position="179"/>
    </location>
    <ligand>
        <name>FMN</name>
        <dbReference type="ChEBI" id="CHEBI:58210"/>
    </ligand>
</feature>
<feature type="binding site" evidence="1">
    <location>
        <begin position="185"/>
        <end position="187"/>
    </location>
    <ligand>
        <name>substrate</name>
    </ligand>
</feature>
<feature type="binding site" evidence="1">
    <location>
        <position position="189"/>
    </location>
    <ligand>
        <name>FMN</name>
        <dbReference type="ChEBI" id="CHEBI:58210"/>
    </ligand>
</feature>
<evidence type="ECO:0000255" key="1">
    <source>
        <dbReference type="HAMAP-Rule" id="MF_01629"/>
    </source>
</evidence>
<dbReference type="EC" id="1.4.3.5" evidence="1"/>
<dbReference type="EMBL" id="AE014291">
    <property type="protein sequence ID" value="AAN29361.1"/>
    <property type="molecule type" value="Genomic_DNA"/>
</dbReference>
<dbReference type="EMBL" id="CP002997">
    <property type="protein sequence ID" value="AEM17774.1"/>
    <property type="molecule type" value="Genomic_DNA"/>
</dbReference>
<dbReference type="PIR" id="AG3441">
    <property type="entry name" value="AG3441"/>
</dbReference>
<dbReference type="SMR" id="Q8G2A9"/>
<dbReference type="KEGG" id="bms:BR0416"/>
<dbReference type="KEGG" id="bsi:BS1330_I0417"/>
<dbReference type="HOGENOM" id="CLU_032263_2_3_5"/>
<dbReference type="UniPathway" id="UPA01068">
    <property type="reaction ID" value="UER00304"/>
</dbReference>
<dbReference type="UniPathway" id="UPA01068">
    <property type="reaction ID" value="UER00305"/>
</dbReference>
<dbReference type="Proteomes" id="UP000007104">
    <property type="component" value="Chromosome I"/>
</dbReference>
<dbReference type="GO" id="GO:0010181">
    <property type="term" value="F:FMN binding"/>
    <property type="evidence" value="ECO:0007669"/>
    <property type="project" value="UniProtKB-UniRule"/>
</dbReference>
<dbReference type="GO" id="GO:0004733">
    <property type="term" value="F:pyridoxamine phosphate oxidase activity"/>
    <property type="evidence" value="ECO:0007669"/>
    <property type="project" value="UniProtKB-UniRule"/>
</dbReference>
<dbReference type="GO" id="GO:0008615">
    <property type="term" value="P:pyridoxine biosynthetic process"/>
    <property type="evidence" value="ECO:0007669"/>
    <property type="project" value="UniProtKB-KW"/>
</dbReference>
<dbReference type="Gene3D" id="2.30.110.10">
    <property type="entry name" value="Electron Transport, Fmn-binding Protein, Chain A"/>
    <property type="match status" value="1"/>
</dbReference>
<dbReference type="HAMAP" id="MF_01629">
    <property type="entry name" value="PdxH"/>
    <property type="match status" value="1"/>
</dbReference>
<dbReference type="InterPro" id="IPR000659">
    <property type="entry name" value="Pyridox_Oxase"/>
</dbReference>
<dbReference type="InterPro" id="IPR019740">
    <property type="entry name" value="Pyridox_Oxase_CS"/>
</dbReference>
<dbReference type="InterPro" id="IPR011576">
    <property type="entry name" value="Pyridox_Oxase_N"/>
</dbReference>
<dbReference type="InterPro" id="IPR019576">
    <property type="entry name" value="Pyridoxamine_oxidase_dimer_C"/>
</dbReference>
<dbReference type="InterPro" id="IPR012349">
    <property type="entry name" value="Split_barrel_FMN-bd"/>
</dbReference>
<dbReference type="NCBIfam" id="TIGR00558">
    <property type="entry name" value="pdxH"/>
    <property type="match status" value="1"/>
</dbReference>
<dbReference type="NCBIfam" id="NF004231">
    <property type="entry name" value="PRK05679.1"/>
    <property type="match status" value="1"/>
</dbReference>
<dbReference type="PANTHER" id="PTHR10851:SF0">
    <property type="entry name" value="PYRIDOXINE-5'-PHOSPHATE OXIDASE"/>
    <property type="match status" value="1"/>
</dbReference>
<dbReference type="PANTHER" id="PTHR10851">
    <property type="entry name" value="PYRIDOXINE-5-PHOSPHATE OXIDASE"/>
    <property type="match status" value="1"/>
</dbReference>
<dbReference type="Pfam" id="PF10590">
    <property type="entry name" value="PNP_phzG_C"/>
    <property type="match status" value="1"/>
</dbReference>
<dbReference type="Pfam" id="PF01243">
    <property type="entry name" value="PNPOx_N"/>
    <property type="match status" value="1"/>
</dbReference>
<dbReference type="PIRSF" id="PIRSF000190">
    <property type="entry name" value="Pyd_amn-ph_oxd"/>
    <property type="match status" value="1"/>
</dbReference>
<dbReference type="SUPFAM" id="SSF50475">
    <property type="entry name" value="FMN-binding split barrel"/>
    <property type="match status" value="1"/>
</dbReference>
<dbReference type="PROSITE" id="PS01064">
    <property type="entry name" value="PYRIDOX_OXIDASE"/>
    <property type="match status" value="1"/>
</dbReference>
<keyword id="KW-0285">Flavoprotein</keyword>
<keyword id="KW-0288">FMN</keyword>
<keyword id="KW-0560">Oxidoreductase</keyword>
<keyword id="KW-0664">Pyridoxine biosynthesis</keyword>
<reference key="1">
    <citation type="journal article" date="2002" name="Proc. Natl. Acad. Sci. U.S.A.">
        <title>The Brucella suis genome reveals fundamental similarities between animal and plant pathogens and symbionts.</title>
        <authorList>
            <person name="Paulsen I.T."/>
            <person name="Seshadri R."/>
            <person name="Nelson K.E."/>
            <person name="Eisen J.A."/>
            <person name="Heidelberg J.F."/>
            <person name="Read T.D."/>
            <person name="Dodson R.J."/>
            <person name="Umayam L.A."/>
            <person name="Brinkac L.M."/>
            <person name="Beanan M.J."/>
            <person name="Daugherty S.C."/>
            <person name="DeBoy R.T."/>
            <person name="Durkin A.S."/>
            <person name="Kolonay J.F."/>
            <person name="Madupu R."/>
            <person name="Nelson W.C."/>
            <person name="Ayodeji B."/>
            <person name="Kraul M."/>
            <person name="Shetty J."/>
            <person name="Malek J.A."/>
            <person name="Van Aken S.E."/>
            <person name="Riedmuller S."/>
            <person name="Tettelin H."/>
            <person name="Gill S.R."/>
            <person name="White O."/>
            <person name="Salzberg S.L."/>
            <person name="Hoover D.L."/>
            <person name="Lindler L.E."/>
            <person name="Halling S.M."/>
            <person name="Boyle S.M."/>
            <person name="Fraser C.M."/>
        </authorList>
    </citation>
    <scope>NUCLEOTIDE SEQUENCE [LARGE SCALE GENOMIC DNA]</scope>
    <source>
        <strain>1330</strain>
    </source>
</reference>
<reference key="2">
    <citation type="journal article" date="2011" name="J. Bacteriol.">
        <title>Revised genome sequence of Brucella suis 1330.</title>
        <authorList>
            <person name="Tae H."/>
            <person name="Shallom S."/>
            <person name="Settlage R."/>
            <person name="Preston D."/>
            <person name="Adams L.G."/>
            <person name="Garner H.R."/>
        </authorList>
    </citation>
    <scope>NUCLEOTIDE SEQUENCE [LARGE SCALE GENOMIC DNA]</scope>
    <source>
        <strain>1330</strain>
    </source>
</reference>
<protein>
    <recommendedName>
        <fullName evidence="1">Pyridoxine/pyridoxamine 5'-phosphate oxidase</fullName>
        <ecNumber evidence="1">1.4.3.5</ecNumber>
    </recommendedName>
    <alternativeName>
        <fullName evidence="1">PNP/PMP oxidase</fullName>
        <shortName evidence="1">PNPOx</shortName>
    </alternativeName>
    <alternativeName>
        <fullName evidence="1">Pyridoxal 5'-phosphate synthase</fullName>
    </alternativeName>
</protein>
<accession>Q8G2A9</accession>
<accession>G0K6N7</accession>
<proteinExistence type="inferred from homology"/>
<gene>
    <name evidence="1" type="primary">pdxH</name>
    <name type="ordered locus">BR0416</name>
    <name type="ordered locus">BS1330_I0417</name>
</gene>
<name>PDXH_BRUSU</name>